<feature type="chain" id="PRO_0000454622" description="3-hydroxyacyl-CoA dehydrogenase FVEG_12628">
    <location>
        <begin position="1"/>
        <end position="322"/>
    </location>
</feature>
<feature type="transmembrane region" description="Helical" evidence="2">
    <location>
        <begin position="5"/>
        <end position="25"/>
    </location>
</feature>
<feature type="active site" description="For hydroxyacyl-coenzyme A dehydrogenase activity" evidence="1">
    <location>
        <position position="151"/>
    </location>
</feature>
<feature type="site" description="Important for hydroxyacyl-coenzyme A dehydrogenase activity" evidence="1">
    <location>
        <position position="139"/>
    </location>
</feature>
<gene>
    <name type="ORF">FVEG_12628</name>
</gene>
<protein>
    <recommendedName>
        <fullName evidence="7">3-hydroxyacyl-CoA dehydrogenase FVEG_12628</fullName>
        <ecNumber evidence="9">1.1.1.-</ecNumber>
    </recommendedName>
    <alternativeName>
        <fullName evidence="7">Fusarium detoxification of benzoxazolinone cluster 2 protein FVEG_12628</fullName>
        <shortName evidence="7">FDB2 cluster protein FVEG_12628</shortName>
    </alternativeName>
</protein>
<reference key="1">
    <citation type="journal article" date="2010" name="Nature">
        <title>Comparative genomics reveals mobile pathogenicity chromosomes in Fusarium.</title>
        <authorList>
            <person name="Ma L.-J."/>
            <person name="van der Does H.C."/>
            <person name="Borkovich K.A."/>
            <person name="Coleman J.J."/>
            <person name="Daboussi M.-J."/>
            <person name="Di Pietro A."/>
            <person name="Dufresne M."/>
            <person name="Freitag M."/>
            <person name="Grabherr M."/>
            <person name="Henrissat B."/>
            <person name="Houterman P.M."/>
            <person name="Kang S."/>
            <person name="Shim W.-B."/>
            <person name="Woloshuk C."/>
            <person name="Xie X."/>
            <person name="Xu J.-R."/>
            <person name="Antoniw J."/>
            <person name="Baker S.E."/>
            <person name="Bluhm B.H."/>
            <person name="Breakspear A."/>
            <person name="Brown D.W."/>
            <person name="Butchko R.A.E."/>
            <person name="Chapman S."/>
            <person name="Coulson R."/>
            <person name="Coutinho P.M."/>
            <person name="Danchin E.G.J."/>
            <person name="Diener A."/>
            <person name="Gale L.R."/>
            <person name="Gardiner D.M."/>
            <person name="Goff S."/>
            <person name="Hammond-Kosack K.E."/>
            <person name="Hilburn K."/>
            <person name="Hua-Van A."/>
            <person name="Jonkers W."/>
            <person name="Kazan K."/>
            <person name="Kodira C.D."/>
            <person name="Koehrsen M."/>
            <person name="Kumar L."/>
            <person name="Lee Y.-H."/>
            <person name="Li L."/>
            <person name="Manners J.M."/>
            <person name="Miranda-Saavedra D."/>
            <person name="Mukherjee M."/>
            <person name="Park G."/>
            <person name="Park J."/>
            <person name="Park S.-Y."/>
            <person name="Proctor R.H."/>
            <person name="Regev A."/>
            <person name="Ruiz-Roldan M.C."/>
            <person name="Sain D."/>
            <person name="Sakthikumar S."/>
            <person name="Sykes S."/>
            <person name="Schwartz D.C."/>
            <person name="Turgeon B.G."/>
            <person name="Wapinski I."/>
            <person name="Yoder O."/>
            <person name="Young S."/>
            <person name="Zeng Q."/>
            <person name="Zhou S."/>
            <person name="Galagan J."/>
            <person name="Cuomo C.A."/>
            <person name="Kistler H.C."/>
            <person name="Rep M."/>
        </authorList>
    </citation>
    <scope>NUCLEOTIDE SEQUENCE [LARGE SCALE GENOMIC DNA]</scope>
    <source>
        <strain>M3125 / FGSC 7600</strain>
    </source>
</reference>
<reference key="2">
    <citation type="journal article" date="2002" name="Mol. Plant Microbe Interact.">
        <title>Fdb1 and Fdb2, Fusarium verticillioides loci necessary for detoxification of preformed antimicrobials from corn.</title>
        <authorList>
            <person name="Glenn A.E."/>
            <person name="Gold S.E."/>
            <person name="Bacon C.W."/>
        </authorList>
    </citation>
    <scope>FUNCTION</scope>
</reference>
<reference key="3">
    <citation type="journal article" date="2003" name="Appl. Environ. Microbiol.">
        <title>Identification of intermediate and branch metabolites resulting from biotransformation of 2-benzoxazolinone by Fusarium verticillioides.</title>
        <authorList>
            <person name="Glenn A.E."/>
            <person name="Meredith F.I."/>
            <person name="Morrison W.H. III"/>
            <person name="Bacon C.W."/>
        </authorList>
    </citation>
    <scope>FUNCTION</scope>
</reference>
<reference key="4">
    <citation type="journal article" date="2009" name="J. Appl. Microbiol.">
        <title>FDB2 encodes a member of the arylamine N-acetyltransferase family and is necessary for biotransformation of benzoxazolinones by Fusarium verticillioides.</title>
        <authorList>
            <person name="Glenn A.E."/>
            <person name="Bacon C.W."/>
        </authorList>
    </citation>
    <scope>FUNCTION</scope>
    <scope>DISRUPTION PHENOTYPE</scope>
</reference>
<reference key="5">
    <citation type="journal article" date="2016" name="PLoS ONE">
        <title>Two horizontally transferred xenobiotic resistance gene clusters associated with detoxification of benzoxazolinones by Fusarium species.</title>
        <authorList>
            <person name="Glenn A.E."/>
            <person name="Davis C.B."/>
            <person name="Gao M."/>
            <person name="Gold S.E."/>
            <person name="Mitchell T.R."/>
            <person name="Proctor R.H."/>
            <person name="Stewart J.E."/>
            <person name="Snook M.E."/>
        </authorList>
    </citation>
    <scope>FUNCTION</scope>
    <scope>INDUCTION</scope>
</reference>
<name>FDB28_GIBM7</name>
<evidence type="ECO:0000250" key="1">
    <source>
        <dbReference type="UniProtKB" id="P40939"/>
    </source>
</evidence>
<evidence type="ECO:0000255" key="2"/>
<evidence type="ECO:0000269" key="3">
    <source>
    </source>
</evidence>
<evidence type="ECO:0000269" key="4">
    <source>
    </source>
</evidence>
<evidence type="ECO:0000269" key="5">
    <source>
    </source>
</evidence>
<evidence type="ECO:0000269" key="6">
    <source>
    </source>
</evidence>
<evidence type="ECO:0000303" key="7">
    <source>
    </source>
</evidence>
<evidence type="ECO:0000305" key="8"/>
<evidence type="ECO:0000305" key="9">
    <source>
    </source>
</evidence>
<evidence type="ECO:0000305" key="10">
    <source>
    </source>
</evidence>
<keyword id="KW-0472">Membrane</keyword>
<keyword id="KW-0560">Oxidoreductase</keyword>
<keyword id="KW-1185">Reference proteome</keyword>
<keyword id="KW-0812">Transmembrane</keyword>
<keyword id="KW-1133">Transmembrane helix</keyword>
<proteinExistence type="evidence at transcript level"/>
<accession>W7MSH6</accession>
<organism>
    <name type="scientific">Gibberella moniliformis (strain M3125 / FGSC 7600)</name>
    <name type="common">Maize ear and stalk rot fungus</name>
    <name type="synonym">Fusarium verticillioides</name>
    <dbReference type="NCBI Taxonomy" id="334819"/>
    <lineage>
        <taxon>Eukaryota</taxon>
        <taxon>Fungi</taxon>
        <taxon>Dikarya</taxon>
        <taxon>Ascomycota</taxon>
        <taxon>Pezizomycotina</taxon>
        <taxon>Sordariomycetes</taxon>
        <taxon>Hypocreomycetidae</taxon>
        <taxon>Hypocreales</taxon>
        <taxon>Nectriaceae</taxon>
        <taxon>Fusarium</taxon>
        <taxon>Fusarium fujikuroi species complex</taxon>
    </lineage>
</organism>
<sequence>MTQEIRTVAIVGCGVIGMGWAVLFLSRGLKVIISDPMEGAENALKGYFEQSRSYLEGFGDYDKLVSNYEFVHDIASRLAEADLIQENGPERLEFKRGLIATLDKYARPGVVIASSSSGLPSSEFIQQCKQDSTRVLIGHPFNPPHLIPLVEVVPHPGTSSESVNTALNFYRSVGKRPILLHHEVPGFVSNRLQAAINNEAYSLISRGIVSAEDLDAAVTSGPGLRWALTGPIATNALGGGGGPEGFSQRMERLGPAIRGWEDDILKHRFDWSEQRMSALQESVNKSLGAVKWDQLVEERDLVLLQLLAAKQKMASMSTPSGH</sequence>
<dbReference type="EC" id="1.1.1.-" evidence="9"/>
<dbReference type="EMBL" id="CM000580">
    <property type="protein sequence ID" value="EWG54408.1"/>
    <property type="molecule type" value="Genomic_DNA"/>
</dbReference>
<dbReference type="RefSeq" id="XP_018760599.1">
    <property type="nucleotide sequence ID" value="XM_018901978.1"/>
</dbReference>
<dbReference type="SMR" id="W7MSH6"/>
<dbReference type="STRING" id="334819.W7MSH6"/>
<dbReference type="EnsemblFungi" id="FVEG_12628T0">
    <property type="protein sequence ID" value="FVEG_12628T0"/>
    <property type="gene ID" value="FVEG_12628"/>
</dbReference>
<dbReference type="GeneID" id="30070058"/>
<dbReference type="KEGG" id="fvr:FVEG_12628"/>
<dbReference type="VEuPathDB" id="FungiDB:FVEG_12628"/>
<dbReference type="eggNOG" id="KOG2305">
    <property type="taxonomic scope" value="Eukaryota"/>
</dbReference>
<dbReference type="HOGENOM" id="CLU_009834_0_1_1"/>
<dbReference type="OMA" id="VIGMGWA"/>
<dbReference type="OrthoDB" id="38163at110618"/>
<dbReference type="Proteomes" id="UP000009096">
    <property type="component" value="Chromosome 3"/>
</dbReference>
<dbReference type="GO" id="GO:0016020">
    <property type="term" value="C:membrane"/>
    <property type="evidence" value="ECO:0007669"/>
    <property type="project" value="UniProtKB-SubCell"/>
</dbReference>
<dbReference type="GO" id="GO:0050104">
    <property type="term" value="F:L-gulonate 3-dehydrogenase activity"/>
    <property type="evidence" value="ECO:0007669"/>
    <property type="project" value="TreeGrafter"/>
</dbReference>
<dbReference type="GO" id="GO:0070403">
    <property type="term" value="F:NAD+ binding"/>
    <property type="evidence" value="ECO:0007669"/>
    <property type="project" value="InterPro"/>
</dbReference>
<dbReference type="GO" id="GO:0006631">
    <property type="term" value="P:fatty acid metabolic process"/>
    <property type="evidence" value="ECO:0007669"/>
    <property type="project" value="InterPro"/>
</dbReference>
<dbReference type="Gene3D" id="1.10.1040.10">
    <property type="entry name" value="N-(1-d-carboxylethyl)-l-norvaline Dehydrogenase, domain 2"/>
    <property type="match status" value="1"/>
</dbReference>
<dbReference type="Gene3D" id="3.40.50.720">
    <property type="entry name" value="NAD(P)-binding Rossmann-like Domain"/>
    <property type="match status" value="1"/>
</dbReference>
<dbReference type="InterPro" id="IPR006176">
    <property type="entry name" value="3-OHacyl-CoA_DH_NAD-bd"/>
</dbReference>
<dbReference type="InterPro" id="IPR006108">
    <property type="entry name" value="3HC_DH_C"/>
</dbReference>
<dbReference type="InterPro" id="IPR008927">
    <property type="entry name" value="6-PGluconate_DH-like_C_sf"/>
</dbReference>
<dbReference type="InterPro" id="IPR013328">
    <property type="entry name" value="6PGD_dom2"/>
</dbReference>
<dbReference type="InterPro" id="IPR036291">
    <property type="entry name" value="NAD(P)-bd_dom_sf"/>
</dbReference>
<dbReference type="PANTHER" id="PTHR48075">
    <property type="entry name" value="3-HYDROXYACYL-COA DEHYDROGENASE FAMILY PROTEIN"/>
    <property type="match status" value="1"/>
</dbReference>
<dbReference type="PANTHER" id="PTHR48075:SF1">
    <property type="entry name" value="LAMBDA-CRYSTALLIN HOMOLOG"/>
    <property type="match status" value="1"/>
</dbReference>
<dbReference type="Pfam" id="PF00725">
    <property type="entry name" value="3HCDH"/>
    <property type="match status" value="1"/>
</dbReference>
<dbReference type="Pfam" id="PF02737">
    <property type="entry name" value="3HCDH_N"/>
    <property type="match status" value="1"/>
</dbReference>
<dbReference type="SUPFAM" id="SSF48179">
    <property type="entry name" value="6-phosphogluconate dehydrogenase C-terminal domain-like"/>
    <property type="match status" value="1"/>
</dbReference>
<dbReference type="SUPFAM" id="SSF51735">
    <property type="entry name" value="NAD(P)-binding Rossmann-fold domains"/>
    <property type="match status" value="1"/>
</dbReference>
<comment type="function">
    <text evidence="3 4 5 6 10">3-hydroxyacyl-CoA dehydrogenase; part of the Fusarium detoxification of benzoxazolinone cluster 2 (FDB2) involved in the degradation of benzoxazolinones produced by the host plant (PubMed:19302487, PubMed:26808652). Maize, wheat, and rye produce the 2 benzoxazinone phytoanticipins 2,4-dihy-droxy-7-methoxy-1,4-benzoxazin-3-one (DIMBOA) and 2,4-dihydroxy-1,4-benzoxazin-3-one (DIBOA) that, due to their inherent instability once released, spontaneously degrade to the more stable corresponding benzoxazolinones, 6-methoxy-2-benzoxazolinone (MBOA) and 2-benzoxazolinone (BOA), respectively (PubMed:11876429). The first step in the detoxification of benzoxazolinones involves the hydrolysis of the cyclic ester bond of benzoxazolinones by the FDB1 cluster gamma-lactamase MBL1 to aminophenols (PubMed:12788712, PubMed:26808652). MBL1 is able to convert BOA into 2-aminophenol (2-AP), as well as MBOA into 5-methoxy-2-aminophenol (2-AMP) (PubMed:12788712, PubMed:26808652). The FDB2 cluster N-malonyltransferase FDB2/NAT1 then metabolizes aminophenols via N-malonylation to non-toxic malonamic acids (PubMed:12788712, PubMed:19302487). FDB2/NAT1 converts 2-AP into N-(2-hydroxyphenyl) malonamic acid (HPMA) and 2-AMP into N-(2-hydroxy-4-methoxyphenyl) malonamic acid (HMPMA) (PubMed:12788712, PubMed:19302487). The duplicated dienlactone hydrolases DLH1 and DLH2 may provide redundant function for hydrolyzing the lactone moiety in the BOA molecule (Probable). The roles of the amidases an other enzymes encoded by the 2 FDB clusters have not been identified so far (Probable).</text>
</comment>
<comment type="subcellular location">
    <subcellularLocation>
        <location evidence="2">Membrane</location>
        <topology evidence="2">Single-pass membrane protein</topology>
    </subcellularLocation>
</comment>
<comment type="induction">
    <text evidence="6">Expression is induced in response to 2-benzoxasolinone (BOA) exposure.</text>
</comment>
<comment type="disruption phenotype">
    <text evidence="5">Does not affect tolerance to 2-benzoxazolinone (BOA).</text>
</comment>
<comment type="miscellaneous">
    <text evidence="10">Fusarium verticillioides possesses 2 unlinked loci, FDB1 and FDB2, necessary for detoxification of antimicrobial compounds produced by maize, including 2-benzoxazolinone (BOA) (Probable). The FDB2 cluster arose as a duplication of the FDB1 cluster with rearrangement and expansion by incorporating additional genes (Probable).</text>
</comment>
<comment type="similarity">
    <text evidence="8">Belongs to the 3-hydroxyacyl-CoA dehydrogenase family.</text>
</comment>